<keyword id="KW-0131">Cell cycle</keyword>
<keyword id="KW-0132">Cell division</keyword>
<keyword id="KW-0175">Coiled coil</keyword>
<keyword id="KW-0963">Cytoplasm</keyword>
<keyword id="KW-0717">Septation</keyword>
<organism>
    <name type="scientific">Salmonella agona (strain SL483)</name>
    <dbReference type="NCBI Taxonomy" id="454166"/>
    <lineage>
        <taxon>Bacteria</taxon>
        <taxon>Pseudomonadati</taxon>
        <taxon>Pseudomonadota</taxon>
        <taxon>Gammaproteobacteria</taxon>
        <taxon>Enterobacterales</taxon>
        <taxon>Enterobacteriaceae</taxon>
        <taxon>Salmonella</taxon>
    </lineage>
</organism>
<reference key="1">
    <citation type="journal article" date="2011" name="J. Bacteriol.">
        <title>Comparative genomics of 28 Salmonella enterica isolates: evidence for CRISPR-mediated adaptive sublineage evolution.</title>
        <authorList>
            <person name="Fricke W.F."/>
            <person name="Mammel M.K."/>
            <person name="McDermott P.F."/>
            <person name="Tartera C."/>
            <person name="White D.G."/>
            <person name="Leclerc J.E."/>
            <person name="Ravel J."/>
            <person name="Cebula T.A."/>
        </authorList>
    </citation>
    <scope>NUCLEOTIDE SEQUENCE [LARGE SCALE GENOMIC DNA]</scope>
    <source>
        <strain>SL483</strain>
    </source>
</reference>
<protein>
    <recommendedName>
        <fullName evidence="1">Cell division protein ZapA</fullName>
    </recommendedName>
    <alternativeName>
        <fullName evidence="1">Z ring-associated protein ZapA</fullName>
    </alternativeName>
</protein>
<evidence type="ECO:0000255" key="1">
    <source>
        <dbReference type="HAMAP-Rule" id="MF_02012"/>
    </source>
</evidence>
<name>ZAPA_SALA4</name>
<gene>
    <name evidence="1" type="primary">zapA</name>
    <name type="ordered locus">SeAg_B3219</name>
</gene>
<comment type="function">
    <text evidence="1">Activator of cell division through the inhibition of FtsZ GTPase activity, therefore promoting FtsZ assembly into bundles of protofilaments necessary for the formation of the division Z ring. It is recruited early at mid-cell but it is not essential for cell division.</text>
</comment>
<comment type="subunit">
    <text evidence="1">Homodimer. Interacts with FtsZ.</text>
</comment>
<comment type="subcellular location">
    <subcellularLocation>
        <location evidence="1">Cytoplasm</location>
    </subcellularLocation>
    <text evidence="1">Localizes at mid-cell.</text>
</comment>
<comment type="similarity">
    <text evidence="1">Belongs to the ZapA family. Type 1 subfamily.</text>
</comment>
<sequence>MSAQPVDIQIFGRSLRVNCPPDQRDALNQAADDLNQRLQDLKVRTRVTNTEQLVFIAALNISYELTQEKAKTRDYAASMEQRIRMLQQTIEQALLDQGRITEKTGQNFE</sequence>
<accession>B5F5I6</accession>
<dbReference type="EMBL" id="CP001138">
    <property type="protein sequence ID" value="ACH49488.1"/>
    <property type="molecule type" value="Genomic_DNA"/>
</dbReference>
<dbReference type="RefSeq" id="WP_001276011.1">
    <property type="nucleotide sequence ID" value="NC_011149.1"/>
</dbReference>
<dbReference type="SMR" id="B5F5I6"/>
<dbReference type="GeneID" id="66757358"/>
<dbReference type="KEGG" id="sea:SeAg_B3219"/>
<dbReference type="HOGENOM" id="CLU_116623_3_0_6"/>
<dbReference type="Proteomes" id="UP000008819">
    <property type="component" value="Chromosome"/>
</dbReference>
<dbReference type="GO" id="GO:0032153">
    <property type="term" value="C:cell division site"/>
    <property type="evidence" value="ECO:0007669"/>
    <property type="project" value="TreeGrafter"/>
</dbReference>
<dbReference type="GO" id="GO:0030428">
    <property type="term" value="C:cell septum"/>
    <property type="evidence" value="ECO:0007669"/>
    <property type="project" value="TreeGrafter"/>
</dbReference>
<dbReference type="GO" id="GO:0005829">
    <property type="term" value="C:cytosol"/>
    <property type="evidence" value="ECO:0007669"/>
    <property type="project" value="TreeGrafter"/>
</dbReference>
<dbReference type="GO" id="GO:0005886">
    <property type="term" value="C:plasma membrane"/>
    <property type="evidence" value="ECO:0007669"/>
    <property type="project" value="UniProtKB-UniRule"/>
</dbReference>
<dbReference type="GO" id="GO:0000917">
    <property type="term" value="P:division septum assembly"/>
    <property type="evidence" value="ECO:0007669"/>
    <property type="project" value="UniProtKB-KW"/>
</dbReference>
<dbReference type="GO" id="GO:0043093">
    <property type="term" value="P:FtsZ-dependent cytokinesis"/>
    <property type="evidence" value="ECO:0007669"/>
    <property type="project" value="TreeGrafter"/>
</dbReference>
<dbReference type="GO" id="GO:0000921">
    <property type="term" value="P:septin ring assembly"/>
    <property type="evidence" value="ECO:0007669"/>
    <property type="project" value="TreeGrafter"/>
</dbReference>
<dbReference type="FunFam" id="1.20.5.50:FF:000001">
    <property type="entry name" value="Cell division protein ZapA"/>
    <property type="match status" value="1"/>
</dbReference>
<dbReference type="FunFam" id="3.30.160.880:FF:000001">
    <property type="entry name" value="Cell division protein ZapA"/>
    <property type="match status" value="1"/>
</dbReference>
<dbReference type="Gene3D" id="1.20.5.50">
    <property type="match status" value="1"/>
</dbReference>
<dbReference type="Gene3D" id="3.30.160.880">
    <property type="entry name" value="Cell division protein ZapA protomer, N-terminal domain"/>
    <property type="match status" value="1"/>
</dbReference>
<dbReference type="HAMAP" id="MF_02012">
    <property type="entry name" value="ZapA_type1"/>
    <property type="match status" value="1"/>
</dbReference>
<dbReference type="InterPro" id="IPR007838">
    <property type="entry name" value="Cell_div_ZapA-like"/>
</dbReference>
<dbReference type="InterPro" id="IPR036192">
    <property type="entry name" value="Cell_div_ZapA-like_sf"/>
</dbReference>
<dbReference type="InterPro" id="IPR023771">
    <property type="entry name" value="Cell_div_ZapA_eubact"/>
</dbReference>
<dbReference type="InterPro" id="IPR042233">
    <property type="entry name" value="Cell_div_ZapA_N"/>
</dbReference>
<dbReference type="NCBIfam" id="NF008209">
    <property type="entry name" value="PRK10972.1"/>
    <property type="match status" value="1"/>
</dbReference>
<dbReference type="PANTHER" id="PTHR34981">
    <property type="entry name" value="CELL DIVISION PROTEIN ZAPA"/>
    <property type="match status" value="1"/>
</dbReference>
<dbReference type="PANTHER" id="PTHR34981:SF1">
    <property type="entry name" value="CELL DIVISION PROTEIN ZAPA"/>
    <property type="match status" value="1"/>
</dbReference>
<dbReference type="Pfam" id="PF05164">
    <property type="entry name" value="ZapA"/>
    <property type="match status" value="1"/>
</dbReference>
<dbReference type="SUPFAM" id="SSF102829">
    <property type="entry name" value="Cell division protein ZapA-like"/>
    <property type="match status" value="1"/>
</dbReference>
<feature type="chain" id="PRO_1000189518" description="Cell division protein ZapA">
    <location>
        <begin position="1"/>
        <end position="109"/>
    </location>
</feature>
<feature type="coiled-coil region" evidence="1">
    <location>
        <begin position="21"/>
        <end position="97"/>
    </location>
</feature>
<proteinExistence type="inferred from homology"/>